<keyword id="KW-0067">ATP-binding</keyword>
<keyword id="KW-0903">Direct protein sequencing</keyword>
<keyword id="KW-0418">Kinase</keyword>
<keyword id="KW-0547">Nucleotide-binding</keyword>
<keyword id="KW-0808">Transferase</keyword>
<dbReference type="EC" id="2.7.1.113"/>
<dbReference type="EMBL" id="U01881">
    <property type="protein sequence ID" value="AAB09751.1"/>
    <property type="molecule type" value="Genomic_DNA"/>
</dbReference>
<dbReference type="EMBL" id="AE017198">
    <property type="protein sequence ID" value="AAS09770.1"/>
    <property type="molecule type" value="Genomic_DNA"/>
</dbReference>
<dbReference type="PIR" id="B56168">
    <property type="entry name" value="B56168"/>
</dbReference>
<dbReference type="RefSeq" id="WP_011162602.1">
    <property type="nucleotide sequence ID" value="NC_005362.1"/>
</dbReference>
<dbReference type="SMR" id="Q74HC2"/>
<dbReference type="KEGG" id="ljo:LJ_1825"/>
<dbReference type="PATRIC" id="fig|257314.6.peg.1826"/>
<dbReference type="eggNOG" id="COG1428">
    <property type="taxonomic scope" value="Bacteria"/>
</dbReference>
<dbReference type="HOGENOM" id="CLU_030466_2_1_9"/>
<dbReference type="BRENDA" id="2.7.1.113">
    <property type="organism ID" value="2873"/>
</dbReference>
<dbReference type="SABIO-RK" id="Q74HC2"/>
<dbReference type="Proteomes" id="UP000000581">
    <property type="component" value="Chromosome"/>
</dbReference>
<dbReference type="GO" id="GO:0005737">
    <property type="term" value="C:cytoplasm"/>
    <property type="evidence" value="ECO:0007669"/>
    <property type="project" value="TreeGrafter"/>
</dbReference>
<dbReference type="GO" id="GO:0005524">
    <property type="term" value="F:ATP binding"/>
    <property type="evidence" value="ECO:0007669"/>
    <property type="project" value="UniProtKB-KW"/>
</dbReference>
<dbReference type="GO" id="GO:0004138">
    <property type="term" value="F:deoxyguanosine kinase activity"/>
    <property type="evidence" value="ECO:0007669"/>
    <property type="project" value="UniProtKB-EC"/>
</dbReference>
<dbReference type="CDD" id="cd01673">
    <property type="entry name" value="dNK"/>
    <property type="match status" value="1"/>
</dbReference>
<dbReference type="Gene3D" id="3.40.50.300">
    <property type="entry name" value="P-loop containing nucleotide triphosphate hydrolases"/>
    <property type="match status" value="1"/>
</dbReference>
<dbReference type="InterPro" id="IPR002624">
    <property type="entry name" value="DCK/DGK"/>
</dbReference>
<dbReference type="InterPro" id="IPR050566">
    <property type="entry name" value="Deoxyribonucleoside_kinase"/>
</dbReference>
<dbReference type="InterPro" id="IPR031314">
    <property type="entry name" value="DNK_dom"/>
</dbReference>
<dbReference type="InterPro" id="IPR027417">
    <property type="entry name" value="P-loop_NTPase"/>
</dbReference>
<dbReference type="PANTHER" id="PTHR10513:SF35">
    <property type="entry name" value="DEOXYADENOSINE KINASE"/>
    <property type="match status" value="1"/>
</dbReference>
<dbReference type="PANTHER" id="PTHR10513">
    <property type="entry name" value="DEOXYNUCLEOSIDE KINASE"/>
    <property type="match status" value="1"/>
</dbReference>
<dbReference type="Pfam" id="PF01712">
    <property type="entry name" value="dNK"/>
    <property type="match status" value="1"/>
</dbReference>
<dbReference type="PIRSF" id="PIRSF000705">
    <property type="entry name" value="DNK"/>
    <property type="match status" value="1"/>
</dbReference>
<dbReference type="SUPFAM" id="SSF52540">
    <property type="entry name" value="P-loop containing nucleoside triphosphate hydrolases"/>
    <property type="match status" value="1"/>
</dbReference>
<accession>Q74HC2</accession>
<accession>Q59484</accession>
<accession>Q5FHS9</accession>
<reference key="1">
    <citation type="journal article" date="1995" name="J. Biol. Chem.">
        <title>Cloning and expression of the heterodimeric deoxyguanosine kinase/deoxyadenosine kinase of Lactobacillus acidophilus R-26.</title>
        <authorList>
            <person name="Ma G.T."/>
            <person name="Hong Y.S."/>
            <person name="Ives D.H."/>
        </authorList>
    </citation>
    <scope>NUCLEOTIDE SEQUENCE [GENOMIC DNA]</scope>
    <source>
        <strain>ATCC 11506 / JCM 1101 / NBRC 13952 / NCIMB 8795 / R-26 / VPI 11088</strain>
    </source>
</reference>
<reference key="2">
    <citation type="journal article" date="2004" name="Proc. Natl. Acad. Sci. U.S.A.">
        <title>The genome sequence of the probiotic intestinal bacterium Lactobacillus johnsonii NCC 533.</title>
        <authorList>
            <person name="Pridmore R.D."/>
            <person name="Berger B."/>
            <person name="Desiere F."/>
            <person name="Vilanova D."/>
            <person name="Barretto C."/>
            <person name="Pittet A.-C."/>
            <person name="Zwahlen M.-C."/>
            <person name="Rouvet M."/>
            <person name="Altermann E."/>
            <person name="Barrangou R."/>
            <person name="Mollet B."/>
            <person name="Mercenier A."/>
            <person name="Klaenhammer T."/>
            <person name="Arigoni F."/>
            <person name="Schell M.A."/>
        </authorList>
    </citation>
    <scope>NUCLEOTIDE SEQUENCE [LARGE SCALE GENOMIC DNA]</scope>
    <source>
        <strain>CNCM I-1225 / La1 / NCC 533</strain>
    </source>
</reference>
<reference key="3">
    <citation type="journal article" date="1994" name="Biochemistry">
        <title>Heterodimeric deoxynucleoside kinases of Lactobacillus acidophilus R-26: functional assignment of subunits using limited proteolysis controlled by end-product inhibitors.</title>
        <authorList>
            <person name="Ikeda S."/>
            <person name="Ma G.T."/>
            <person name="Ives D.H."/>
        </authorList>
    </citation>
    <scope>PROTEIN SEQUENCE OF 2-18</scope>
    <source>
        <strain>ATCC 11506 / JCM 1101 / NBRC 13952 / NCIMB 8795 / R-26 / VPI 11088</strain>
    </source>
</reference>
<evidence type="ECO:0000250" key="1"/>
<evidence type="ECO:0000255" key="2"/>
<evidence type="ECO:0000269" key="3">
    <source>
    </source>
</evidence>
<evidence type="ECO:0000305" key="4"/>
<feature type="initiator methionine" description="Removed" evidence="3">
    <location>
        <position position="1"/>
    </location>
</feature>
<feature type="chain" id="PRO_0000239237" description="Deoxyguanosine kinase">
    <location>
        <begin position="2"/>
        <end position="224"/>
    </location>
</feature>
<feature type="active site" description="Proton acceptor" evidence="2">
    <location>
        <position position="78"/>
    </location>
</feature>
<feature type="binding site" evidence="1">
    <location>
        <begin position="8"/>
        <end position="16"/>
    </location>
    <ligand>
        <name>ATP</name>
        <dbReference type="ChEBI" id="CHEBI:30616"/>
    </ligand>
</feature>
<feature type="binding site" evidence="1">
    <location>
        <position position="32"/>
    </location>
    <ligand>
        <name>substrate</name>
    </ligand>
</feature>
<feature type="binding site" evidence="1">
    <location>
        <position position="44"/>
    </location>
    <ligand>
        <name>substrate</name>
    </ligand>
</feature>
<feature type="binding site" evidence="1">
    <location>
        <position position="55"/>
    </location>
    <ligand>
        <name>substrate</name>
    </ligand>
</feature>
<feature type="binding site" evidence="1">
    <location>
        <position position="79"/>
    </location>
    <ligand>
        <name>substrate</name>
    </ligand>
</feature>
<feature type="binding site" evidence="1">
    <location>
        <position position="84"/>
    </location>
    <ligand>
        <name>substrate</name>
    </ligand>
</feature>
<feature type="binding site" evidence="1">
    <location>
        <position position="149"/>
    </location>
    <ligand>
        <name>substrate</name>
    </ligand>
</feature>
<feature type="sequence conflict" description="In Ref. 1; AAB09751." evidence="4" ref="1">
    <original>E</original>
    <variation>A</variation>
    <location>
        <position position="173"/>
    </location>
</feature>
<feature type="sequence conflict" description="In Ref. 1; AAB09751." evidence="4" ref="1">
    <original>F</original>
    <variation>L</variation>
    <location>
        <position position="214"/>
    </location>
</feature>
<comment type="function">
    <text>DGK/DAK plays an essential role in generating the deoxyribonucleotide precursors, dGTP and dATP, for DNA metabolism.</text>
</comment>
<comment type="catalytic activity">
    <reaction>
        <text>2'-deoxyguanosine + ATP = dGMP + ADP + H(+)</text>
        <dbReference type="Rhea" id="RHEA:19201"/>
        <dbReference type="ChEBI" id="CHEBI:15378"/>
        <dbReference type="ChEBI" id="CHEBI:17172"/>
        <dbReference type="ChEBI" id="CHEBI:30616"/>
        <dbReference type="ChEBI" id="CHEBI:57673"/>
        <dbReference type="ChEBI" id="CHEBI:456216"/>
        <dbReference type="EC" id="2.7.1.113"/>
    </reaction>
</comment>
<comment type="subunit">
    <text>Heterodimer of a deoxyadenosine (DAK) and a deoxyguanosine kinase (DGK).</text>
</comment>
<comment type="similarity">
    <text evidence="4">Belongs to the DCK/DGK family.</text>
</comment>
<name>DGK2_LACJO</name>
<protein>
    <recommendedName>
        <fullName>Deoxyguanosine kinase</fullName>
        <shortName>DGK</shortName>
        <shortName>DGUO kinase</shortName>
        <ecNumber>2.7.1.113</ecNumber>
    </recommendedName>
    <alternativeName>
        <fullName>Deoxynucleoside kinase complex I F-component</fullName>
    </alternativeName>
</protein>
<organism>
    <name type="scientific">Lactobacillus johnsonii (strain CNCM I-12250 / La1 / NCC 533)</name>
    <dbReference type="NCBI Taxonomy" id="257314"/>
    <lineage>
        <taxon>Bacteria</taxon>
        <taxon>Bacillati</taxon>
        <taxon>Bacillota</taxon>
        <taxon>Bacilli</taxon>
        <taxon>Lactobacillales</taxon>
        <taxon>Lactobacillaceae</taxon>
        <taxon>Lactobacillus</taxon>
    </lineage>
</organism>
<gene>
    <name type="ordered locus">LJ_1825</name>
</gene>
<sequence>MTVIVLSGPIGAGKSSLTGILSKYLGTNPFYESVDDNPVLPLFYENPKKYAFLLQVYFLNTRFRSIKSALTDDNNVLDRSIYEDALFFQMNADIGRATPEEVDTYYELLHNMMSELDRMPKKNPDLLVHIDVSYDTMLKRIQKRGRNYEQLSYDPTLEDYYKRLLRYYKPWYEKYDYSPKMTIDGDKLDFMASEEDRQEVLNQIVAKLKEMGKFEDDWKPNLVK</sequence>
<proteinExistence type="evidence at protein level"/>